<proteinExistence type="inferred from homology"/>
<keyword id="KW-0012">Acyltransferase</keyword>
<keyword id="KW-0028">Amino-acid biosynthesis</keyword>
<keyword id="KW-0055">Arginine biosynthesis</keyword>
<keyword id="KW-0963">Cytoplasm</keyword>
<keyword id="KW-0808">Transferase</keyword>
<comment type="catalytic activity">
    <reaction>
        <text>L-glutamate + acetyl-CoA = N-acetyl-L-glutamate + CoA + H(+)</text>
        <dbReference type="Rhea" id="RHEA:24292"/>
        <dbReference type="ChEBI" id="CHEBI:15378"/>
        <dbReference type="ChEBI" id="CHEBI:29985"/>
        <dbReference type="ChEBI" id="CHEBI:44337"/>
        <dbReference type="ChEBI" id="CHEBI:57287"/>
        <dbReference type="ChEBI" id="CHEBI:57288"/>
        <dbReference type="EC" id="2.3.1.1"/>
    </reaction>
</comment>
<comment type="pathway">
    <text>Amino-acid biosynthesis; L-arginine biosynthesis; N(2)-acetyl-L-ornithine from L-glutamate: step 1/4.</text>
</comment>
<comment type="subcellular location">
    <subcellularLocation>
        <location evidence="1">Cytoplasm</location>
    </subcellularLocation>
</comment>
<comment type="miscellaneous">
    <text>In bacteria which possess the bifunctional enzyme ornithine acetyltransferase/N-acetylglutamate synthase (ArgJ), ArgA fulfills an anaplerotic role.</text>
</comment>
<comment type="similarity">
    <text evidence="2">Belongs to the acetyltransferase family. ArgA subfamily.</text>
</comment>
<feature type="chain" id="PRO_0000186794" description="Amino-acid acetyltransferase">
    <location>
        <begin position="1"/>
        <end position="436"/>
    </location>
</feature>
<feature type="domain" description="N-acetyltransferase">
    <location>
        <begin position="287"/>
        <end position="436"/>
    </location>
</feature>
<evidence type="ECO:0000250" key="1"/>
<evidence type="ECO:0000305" key="2"/>
<gene>
    <name type="primary">argA</name>
    <name type="ordered locus">NMA0580</name>
</gene>
<accession>Q9JW21</accession>
<accession>A1IQ24</accession>
<name>ARGA_NEIMA</name>
<sequence length="436" mass="47331">MIVPDLFVAHFREAAPYIRQMRGKTLVAGIDDRLLEGDTLNKFAADIGLLSQLGIRLVLIHGARHFLDRHAAAQGRTPHYCRGLRVTDETSLEQAQQFAGTVRSRFEAALCGSVSGFARAPSVPLVSGNFLTARPIGVIDGTDMEYAGVIRKTDTAALRFQLDAGNIVWLPPLGHSYSGKTFHLDMLQTAASVAVSLQAEKLVYLTLSDGISRPDGTLAVTLSAQEAQSLAEHAGGETRRLISSAVAALEGGVHRVQILNGAADGSLLQELFTRNGIGTSIAKEAFVSIRQAHSGDIPHIAALIRPLEEQGILLHRSREYLENHISEFSILEHDGNLYGCAALKTFAEADCGEIACLAVSPQAQDGGYGERLLAHIIDKARGIGISRLFALSTNTGEWFAERGFQTASEDELPETRRKDYRSNGRNSHILVRRLHR</sequence>
<organism>
    <name type="scientific">Neisseria meningitidis serogroup A / serotype 4A (strain DSM 15465 / Z2491)</name>
    <dbReference type="NCBI Taxonomy" id="122587"/>
    <lineage>
        <taxon>Bacteria</taxon>
        <taxon>Pseudomonadati</taxon>
        <taxon>Pseudomonadota</taxon>
        <taxon>Betaproteobacteria</taxon>
        <taxon>Neisseriales</taxon>
        <taxon>Neisseriaceae</taxon>
        <taxon>Neisseria</taxon>
    </lineage>
</organism>
<protein>
    <recommendedName>
        <fullName>Amino-acid acetyltransferase</fullName>
        <ecNumber>2.3.1.1</ecNumber>
    </recommendedName>
    <alternativeName>
        <fullName>N-acetylglutamate synthase</fullName>
        <shortName>AGS</shortName>
        <shortName>NAGS</shortName>
    </alternativeName>
</protein>
<reference key="1">
    <citation type="journal article" date="2000" name="Nature">
        <title>Complete DNA sequence of a serogroup A strain of Neisseria meningitidis Z2491.</title>
        <authorList>
            <person name="Parkhill J."/>
            <person name="Achtman M."/>
            <person name="James K.D."/>
            <person name="Bentley S.D."/>
            <person name="Churcher C.M."/>
            <person name="Klee S.R."/>
            <person name="Morelli G."/>
            <person name="Basham D."/>
            <person name="Brown D."/>
            <person name="Chillingworth T."/>
            <person name="Davies R.M."/>
            <person name="Davis P."/>
            <person name="Devlin K."/>
            <person name="Feltwell T."/>
            <person name="Hamlin N."/>
            <person name="Holroyd S."/>
            <person name="Jagels K."/>
            <person name="Leather S."/>
            <person name="Moule S."/>
            <person name="Mungall K.L."/>
            <person name="Quail M.A."/>
            <person name="Rajandream M.A."/>
            <person name="Rutherford K.M."/>
            <person name="Simmonds M."/>
            <person name="Skelton J."/>
            <person name="Whitehead S."/>
            <person name="Spratt B.G."/>
            <person name="Barrell B.G."/>
        </authorList>
    </citation>
    <scope>NUCLEOTIDE SEQUENCE [LARGE SCALE GENOMIC DNA]</scope>
    <source>
        <strain>DSM 15465 / Z2491</strain>
    </source>
</reference>
<dbReference type="EC" id="2.3.1.1"/>
<dbReference type="EMBL" id="AL157959">
    <property type="protein sequence ID" value="CAM07850.1"/>
    <property type="molecule type" value="Genomic_DNA"/>
</dbReference>
<dbReference type="PIR" id="A81977">
    <property type="entry name" value="A81977"/>
</dbReference>
<dbReference type="RefSeq" id="WP_002247123.1">
    <property type="nucleotide sequence ID" value="NC_003116.1"/>
</dbReference>
<dbReference type="SMR" id="Q9JW21"/>
<dbReference type="EnsemblBacteria" id="CAM07850">
    <property type="protein sequence ID" value="CAM07850"/>
    <property type="gene ID" value="NMA0580"/>
</dbReference>
<dbReference type="KEGG" id="nma:NMA0580"/>
<dbReference type="HOGENOM" id="CLU_024773_0_0_4"/>
<dbReference type="UniPathway" id="UPA00068">
    <property type="reaction ID" value="UER00106"/>
</dbReference>
<dbReference type="Proteomes" id="UP000000626">
    <property type="component" value="Chromosome"/>
</dbReference>
<dbReference type="GO" id="GO:0005737">
    <property type="term" value="C:cytoplasm"/>
    <property type="evidence" value="ECO:0007669"/>
    <property type="project" value="UniProtKB-SubCell"/>
</dbReference>
<dbReference type="GO" id="GO:0004042">
    <property type="term" value="F:L-glutamate N-acetyltransferase activity"/>
    <property type="evidence" value="ECO:0007669"/>
    <property type="project" value="UniProtKB-UniRule"/>
</dbReference>
<dbReference type="GO" id="GO:0006526">
    <property type="term" value="P:L-arginine biosynthetic process"/>
    <property type="evidence" value="ECO:0007669"/>
    <property type="project" value="UniProtKB-UniRule"/>
</dbReference>
<dbReference type="CDD" id="cd04237">
    <property type="entry name" value="AAK_NAGS-ABP"/>
    <property type="match status" value="1"/>
</dbReference>
<dbReference type="CDD" id="cd04301">
    <property type="entry name" value="NAT_SF"/>
    <property type="match status" value="1"/>
</dbReference>
<dbReference type="Gene3D" id="3.40.630.30">
    <property type="match status" value="1"/>
</dbReference>
<dbReference type="Gene3D" id="3.40.1160.10">
    <property type="entry name" value="Acetylglutamate kinase-like"/>
    <property type="match status" value="1"/>
</dbReference>
<dbReference type="HAMAP" id="MF_01105">
    <property type="entry name" value="N_acetyl_glu_synth"/>
    <property type="match status" value="1"/>
</dbReference>
<dbReference type="InterPro" id="IPR036393">
    <property type="entry name" value="AceGlu_kinase-like_sf"/>
</dbReference>
<dbReference type="InterPro" id="IPR016181">
    <property type="entry name" value="Acyl_CoA_acyltransferase"/>
</dbReference>
<dbReference type="InterPro" id="IPR001048">
    <property type="entry name" value="Asp/Glu/Uridylate_kinase"/>
</dbReference>
<dbReference type="InterPro" id="IPR000182">
    <property type="entry name" value="GNAT_dom"/>
</dbReference>
<dbReference type="InterPro" id="IPR033719">
    <property type="entry name" value="NAGS_kin"/>
</dbReference>
<dbReference type="InterPro" id="IPR010167">
    <property type="entry name" value="NH2A_AcTrfase"/>
</dbReference>
<dbReference type="NCBIfam" id="TIGR01890">
    <property type="entry name" value="N-Ac-Glu-synth"/>
    <property type="match status" value="1"/>
</dbReference>
<dbReference type="NCBIfam" id="NF003641">
    <property type="entry name" value="PRK05279.1"/>
    <property type="match status" value="1"/>
</dbReference>
<dbReference type="PANTHER" id="PTHR30602">
    <property type="entry name" value="AMINO-ACID ACETYLTRANSFERASE"/>
    <property type="match status" value="1"/>
</dbReference>
<dbReference type="PANTHER" id="PTHR30602:SF12">
    <property type="entry name" value="AMINO-ACID ACETYLTRANSFERASE NAGS1, CHLOROPLASTIC-RELATED"/>
    <property type="match status" value="1"/>
</dbReference>
<dbReference type="Pfam" id="PF00696">
    <property type="entry name" value="AA_kinase"/>
    <property type="match status" value="1"/>
</dbReference>
<dbReference type="Pfam" id="PF00583">
    <property type="entry name" value="Acetyltransf_1"/>
    <property type="match status" value="1"/>
</dbReference>
<dbReference type="PIRSF" id="PIRSF000423">
    <property type="entry name" value="ArgA"/>
    <property type="match status" value="1"/>
</dbReference>
<dbReference type="SUPFAM" id="SSF55729">
    <property type="entry name" value="Acyl-CoA N-acyltransferases (Nat)"/>
    <property type="match status" value="1"/>
</dbReference>
<dbReference type="SUPFAM" id="SSF53633">
    <property type="entry name" value="Carbamate kinase-like"/>
    <property type="match status" value="1"/>
</dbReference>
<dbReference type="PROSITE" id="PS51186">
    <property type="entry name" value="GNAT"/>
    <property type="match status" value="1"/>
</dbReference>